<reference key="1">
    <citation type="submission" date="2004-11" db="EMBL/GenBank/DDBJ databases">
        <authorList>
            <consortium name="The German cDNA consortium"/>
        </authorList>
    </citation>
    <scope>NUCLEOTIDE SEQUENCE [LARGE SCALE MRNA]</scope>
    <source>
        <tissue>Brain cortex</tissue>
    </source>
</reference>
<protein>
    <recommendedName>
        <fullName evidence="1">Acylglycerol kinase, mitochondrial</fullName>
        <ecNumber evidence="1">2.7.1.107</ecNumber>
        <ecNumber evidence="2">2.7.1.138</ecNumber>
        <ecNumber evidence="1">2.7.1.94</ecNumber>
    </recommendedName>
    <alternativeName>
        <fullName evidence="1">Multiple substrate lipid kinase</fullName>
        <shortName evidence="1">MuLK</shortName>
        <shortName evidence="1">Multi-substrate lipid kinase</shortName>
    </alternativeName>
</protein>
<feature type="chain" id="PRO_0000252382" description="Acylglycerol kinase, mitochondrial">
    <location>
        <begin position="1"/>
        <end position="422"/>
    </location>
</feature>
<feature type="domain" description="DAGKc" evidence="3">
    <location>
        <begin position="58"/>
        <end position="199"/>
    </location>
</feature>
<feature type="region of interest" description="Hydrophobic" evidence="1">
    <location>
        <begin position="15"/>
        <end position="31"/>
    </location>
</feature>
<feature type="region of interest" description="Disordered" evidence="4">
    <location>
        <begin position="249"/>
        <end position="271"/>
    </location>
</feature>
<feature type="modified residue" description="N6-acetyllysine" evidence="1">
    <location>
        <position position="6"/>
    </location>
</feature>
<proteinExistence type="evidence at transcript level"/>
<gene>
    <name evidence="1" type="primary">AGK</name>
    <name evidence="1" type="synonym">MULK</name>
</gene>
<sequence length="422" mass="47068">MTVFFKTLRNHWKKTTAGLCLLTWGGHWLYGKHCDNLLRRAACQEAQVFGNQLIPPNAQVKKATVFLNPAACKGKARTLFEKNAAPILHLCGMDVTIVKTDYEGQAKKLLELMENTDVIIVAGGDGTLQEVVTGVLRRTDEATFSKIPIGFIPLGETSSLSHTLFAESGNKVQHITDATLAIVKGETVPLDVLQIKGEKEQPVFAMTGLRWGSFRDAGVKVSKYWYLGPLKIKAAHFFSTLKEWPQTHQASISYTGPTERPPSEPEETPVQRPSLYRRILRRLASYWAQPQDALSQEVSPEVWKDVQLSTIELSITTRNNQLDPTSKEDFLNICIEPDTISKGDFITIGSRKVRNPKLHAEGTECLQASQCTLLIPEGAGGSFSIDSEEYEAMPVEVKLLPRKLQFFCDPRKREQMLTSPAQ</sequence>
<evidence type="ECO:0000250" key="1">
    <source>
        <dbReference type="UniProtKB" id="Q53H12"/>
    </source>
</evidence>
<evidence type="ECO:0000250" key="2">
    <source>
        <dbReference type="UniProtKB" id="Q9ESW4"/>
    </source>
</evidence>
<evidence type="ECO:0000255" key="3">
    <source>
        <dbReference type="PROSITE-ProRule" id="PRU00783"/>
    </source>
</evidence>
<evidence type="ECO:0000256" key="4">
    <source>
        <dbReference type="SAM" id="MobiDB-lite"/>
    </source>
</evidence>
<evidence type="ECO:0000305" key="5"/>
<comment type="function">
    <text evidence="1 2">Lipid kinase that can phosphorylate both monoacylglycerol and diacylglycerol to form lysophosphatidic acid (LPA) and phosphatidic acid (PA), respectively (By similarity). Phosphorylates ceramide but not sphingosine (By similarity). Phosphorylates 1,2-dioleoylglycerol more rapidly than 2,3-dioleoylglycerol (By similarity). Independently of its lipid kinase activity, acts as a component of the TIM22 complex (By similarity). The TIM22 complex mediates the import and insertion of multi-pass transmembrane proteins into the mitochondrial inner membrane by forming a twin-pore translocase that uses the membrane potential as the external driving force (By similarity). In the TIM22 complex, required for the import of a subset of metabolite carriers into mitochondria, such as ANT1/SLC25A4 and SLC25A24, while it is not required for the import of TIMM23 (By similarity). Overexpression increases the formation and secretion of LPA, resulting in transactivation of EGFR and activation of the downstream MAPK signaling pathway, leading to increased cell growth (By similarity).</text>
</comment>
<comment type="catalytic activity">
    <reaction evidence="1">
        <text>a monoacylglycerol + ATP = a monoacyl-sn-glycero-3-phosphate + ADP + H(+)</text>
        <dbReference type="Rhea" id="RHEA:19293"/>
        <dbReference type="ChEBI" id="CHEBI:15378"/>
        <dbReference type="ChEBI" id="CHEBI:17408"/>
        <dbReference type="ChEBI" id="CHEBI:30616"/>
        <dbReference type="ChEBI" id="CHEBI:77589"/>
        <dbReference type="ChEBI" id="CHEBI:456216"/>
        <dbReference type="EC" id="2.7.1.94"/>
    </reaction>
    <physiologicalReaction direction="left-to-right" evidence="1">
        <dbReference type="Rhea" id="RHEA:19294"/>
    </physiologicalReaction>
</comment>
<comment type="catalytic activity">
    <reaction evidence="1">
        <text>a 1,2-diacyl-sn-glycerol + ATP = a 1,2-diacyl-sn-glycero-3-phosphate + ADP + H(+)</text>
        <dbReference type="Rhea" id="RHEA:10272"/>
        <dbReference type="ChEBI" id="CHEBI:15378"/>
        <dbReference type="ChEBI" id="CHEBI:17815"/>
        <dbReference type="ChEBI" id="CHEBI:30616"/>
        <dbReference type="ChEBI" id="CHEBI:58608"/>
        <dbReference type="ChEBI" id="CHEBI:456216"/>
        <dbReference type="EC" id="2.7.1.107"/>
    </reaction>
    <physiologicalReaction direction="left-to-right" evidence="1">
        <dbReference type="Rhea" id="RHEA:10273"/>
    </physiologicalReaction>
</comment>
<comment type="catalytic activity">
    <reaction evidence="2">
        <text>an N-acylsphing-4-enine + ATP = an N-acylsphing-4-enine 1-phosphate + ADP + H(+)</text>
        <dbReference type="Rhea" id="RHEA:17929"/>
        <dbReference type="ChEBI" id="CHEBI:15378"/>
        <dbReference type="ChEBI" id="CHEBI:30616"/>
        <dbReference type="ChEBI" id="CHEBI:52639"/>
        <dbReference type="ChEBI" id="CHEBI:57674"/>
        <dbReference type="ChEBI" id="CHEBI:456216"/>
        <dbReference type="EC" id="2.7.1.138"/>
    </reaction>
    <physiologicalReaction direction="left-to-right" evidence="2">
        <dbReference type="Rhea" id="RHEA:17930"/>
    </physiologicalReaction>
</comment>
<comment type="catalytic activity">
    <reaction evidence="1">
        <text>1-(9Z-octadecenoyl)-sn-glycerol + ATP = 1-(9Z-octadecenoyl)-sn-glycero-3-phosphate + ADP + H(+)</text>
        <dbReference type="Rhea" id="RHEA:41079"/>
        <dbReference type="ChEBI" id="CHEBI:15378"/>
        <dbReference type="ChEBI" id="CHEBI:30616"/>
        <dbReference type="ChEBI" id="CHEBI:74544"/>
        <dbReference type="ChEBI" id="CHEBI:75757"/>
        <dbReference type="ChEBI" id="CHEBI:456216"/>
    </reaction>
    <physiologicalReaction direction="left-to-right" evidence="1">
        <dbReference type="Rhea" id="RHEA:41080"/>
    </physiologicalReaction>
</comment>
<comment type="catalytic activity">
    <reaction evidence="1">
        <text>1,2-di-(9Z-octadecenoyl)-sn-glycerol + ATP = 1,2-di-(9Z-octadecenoyl)-sn-glycero-3-phosphate + ADP + H(+)</text>
        <dbReference type="Rhea" id="RHEA:40327"/>
        <dbReference type="ChEBI" id="CHEBI:15378"/>
        <dbReference type="ChEBI" id="CHEBI:30616"/>
        <dbReference type="ChEBI" id="CHEBI:52333"/>
        <dbReference type="ChEBI" id="CHEBI:74546"/>
        <dbReference type="ChEBI" id="CHEBI:456216"/>
    </reaction>
    <physiologicalReaction direction="left-to-right" evidence="1">
        <dbReference type="Rhea" id="RHEA:40328"/>
    </physiologicalReaction>
</comment>
<comment type="catalytic activity">
    <reaction evidence="1">
        <text>a 1-acyl-sn-glycerol + ATP = a 1-acyl-sn-glycero-3-phosphate + ADP + H(+)</text>
        <dbReference type="Rhea" id="RHEA:33747"/>
        <dbReference type="ChEBI" id="CHEBI:15378"/>
        <dbReference type="ChEBI" id="CHEBI:30616"/>
        <dbReference type="ChEBI" id="CHEBI:57970"/>
        <dbReference type="ChEBI" id="CHEBI:64683"/>
        <dbReference type="ChEBI" id="CHEBI:456216"/>
    </reaction>
    <physiologicalReaction direction="left-to-right" evidence="1">
        <dbReference type="Rhea" id="RHEA:33748"/>
    </physiologicalReaction>
</comment>
<comment type="catalytic activity">
    <reaction evidence="1">
        <text>1-hexadecanoyl-sn-glycerol + ATP = 1-hexadecanoyl-sn-glycero-3-phosphate + ADP + H(+)</text>
        <dbReference type="Rhea" id="RHEA:43308"/>
        <dbReference type="ChEBI" id="CHEBI:15378"/>
        <dbReference type="ChEBI" id="CHEBI:30616"/>
        <dbReference type="ChEBI" id="CHEBI:57518"/>
        <dbReference type="ChEBI" id="CHEBI:75542"/>
        <dbReference type="ChEBI" id="CHEBI:456216"/>
    </reaction>
    <physiologicalReaction direction="left-to-right" evidence="1">
        <dbReference type="Rhea" id="RHEA:43309"/>
    </physiologicalReaction>
</comment>
<comment type="catalytic activity">
    <reaction evidence="1">
        <text>a 2-acylglycerol + ATP = a 2-acyl-sn-glycerol 3-phosphate + ADP + H(+)</text>
        <dbReference type="Rhea" id="RHEA:39847"/>
        <dbReference type="ChEBI" id="CHEBI:15378"/>
        <dbReference type="ChEBI" id="CHEBI:17389"/>
        <dbReference type="ChEBI" id="CHEBI:30616"/>
        <dbReference type="ChEBI" id="CHEBI:64982"/>
        <dbReference type="ChEBI" id="CHEBI:456216"/>
    </reaction>
    <physiologicalReaction direction="left-to-right" evidence="1">
        <dbReference type="Rhea" id="RHEA:39848"/>
    </physiologicalReaction>
</comment>
<comment type="catalytic activity">
    <reaction evidence="1">
        <text>2-(5Z,8Z,11Z,14Z-eicosatetraenoyl)-glycerol + ATP = 2-(5Z,8Z,11Z,14Z-eicosatetraenoyl)-sn-glycero-3-phosphate + ADP + H(+)</text>
        <dbReference type="Rhea" id="RHEA:43316"/>
        <dbReference type="ChEBI" id="CHEBI:15378"/>
        <dbReference type="ChEBI" id="CHEBI:30616"/>
        <dbReference type="ChEBI" id="CHEBI:52392"/>
        <dbReference type="ChEBI" id="CHEBI:78209"/>
        <dbReference type="ChEBI" id="CHEBI:456216"/>
    </reaction>
    <physiologicalReaction direction="left-to-right" evidence="1">
        <dbReference type="Rhea" id="RHEA:43317"/>
    </physiologicalReaction>
</comment>
<comment type="catalytic activity">
    <reaction evidence="2">
        <text>1-(5Z,8Z,11Z,14Z-eicosatetraenoyl)-sn-glycerol + ATP = 1-(5Z,8Z,11Z,14Z-eicosatetraenoyl)-sn-glycero-3-phosphate + ADP + H(+)</text>
        <dbReference type="Rhea" id="RHEA:43328"/>
        <dbReference type="ChEBI" id="CHEBI:15378"/>
        <dbReference type="ChEBI" id="CHEBI:30616"/>
        <dbReference type="ChEBI" id="CHEBI:34071"/>
        <dbReference type="ChEBI" id="CHEBI:74938"/>
        <dbReference type="ChEBI" id="CHEBI:456216"/>
    </reaction>
    <physiologicalReaction direction="left-to-right" evidence="2">
        <dbReference type="Rhea" id="RHEA:43329"/>
    </physiologicalReaction>
</comment>
<comment type="catalytic activity">
    <reaction evidence="1">
        <text>N-(hexanoyl)sphing-4-enine + ATP = N-hexanoylsphing-4-enine 1-phosphate + ADP + H(+)</text>
        <dbReference type="Rhea" id="RHEA:43312"/>
        <dbReference type="ChEBI" id="CHEBI:15378"/>
        <dbReference type="ChEBI" id="CHEBI:30616"/>
        <dbReference type="ChEBI" id="CHEBI:63867"/>
        <dbReference type="ChEBI" id="CHEBI:82959"/>
        <dbReference type="ChEBI" id="CHEBI:456216"/>
    </reaction>
    <physiologicalReaction direction="left-to-right" evidence="1">
        <dbReference type="Rhea" id="RHEA:43313"/>
    </physiologicalReaction>
</comment>
<comment type="cofactor">
    <cofactor evidence="1">
        <name>Mg(2+)</name>
        <dbReference type="ChEBI" id="CHEBI:18420"/>
    </cofactor>
</comment>
<comment type="pathway">
    <text evidence="1">Lipid metabolism; glycerolipid metabolism.</text>
</comment>
<comment type="subunit">
    <text evidence="1">Component of the TIM22 complex, which core is composed of TIMM22, associated with TIMM10 (TIMM10A and/or TIMM10B), TIMM9, AGK and TIMM29. Interacts with SMIM26.</text>
</comment>
<comment type="subcellular location">
    <subcellularLocation>
        <location evidence="1">Mitochondrion inner membrane</location>
        <topology evidence="1">Peripheral membrane protein</topology>
    </subcellularLocation>
    <subcellularLocation>
        <location evidence="1">Mitochondrion intermembrane space</location>
    </subcellularLocation>
    <text evidence="1">Localizes in the mitochondrion intermembrane space, where it associates with the inner membrane. It is unclear whether the N-terminal hydrophobic region forms a transmembrane region or associates with the membrane without crossing it.</text>
</comment>
<comment type="similarity">
    <text evidence="5">Belongs to the AGK family.</text>
</comment>
<dbReference type="EC" id="2.7.1.107" evidence="1"/>
<dbReference type="EC" id="2.7.1.138" evidence="2"/>
<dbReference type="EC" id="2.7.1.94" evidence="1"/>
<dbReference type="EMBL" id="CR857592">
    <property type="protein sequence ID" value="CAH89870.1"/>
    <property type="molecule type" value="mRNA"/>
</dbReference>
<dbReference type="RefSeq" id="NP_001124872.1">
    <property type="nucleotide sequence ID" value="NM_001131400.1"/>
</dbReference>
<dbReference type="RefSeq" id="XP_009241570.1">
    <property type="nucleotide sequence ID" value="XM_009243295.4"/>
</dbReference>
<dbReference type="SMR" id="Q5RED7"/>
<dbReference type="FunCoup" id="Q5RED7">
    <property type="interactions" value="1825"/>
</dbReference>
<dbReference type="STRING" id="9601.ENSPPYP00000020268"/>
<dbReference type="Ensembl" id="ENSPPYT00000021064.2">
    <property type="protein sequence ID" value="ENSPPYP00000020268.1"/>
    <property type="gene ID" value="ENSPPYG00000018064.2"/>
</dbReference>
<dbReference type="GeneID" id="100171735"/>
<dbReference type="KEGG" id="pon:100171735"/>
<dbReference type="CTD" id="55750"/>
<dbReference type="eggNOG" id="KOG4435">
    <property type="taxonomic scope" value="Eukaryota"/>
</dbReference>
<dbReference type="GeneTree" id="ENSGT00940000154961"/>
<dbReference type="HOGENOM" id="CLU_042458_0_0_1"/>
<dbReference type="InParanoid" id="Q5RED7"/>
<dbReference type="OMA" id="HWKKTTF"/>
<dbReference type="OrthoDB" id="9979394at2759"/>
<dbReference type="TreeFam" id="TF320485"/>
<dbReference type="UniPathway" id="UPA00230"/>
<dbReference type="Proteomes" id="UP000001595">
    <property type="component" value="Chromosome 7"/>
</dbReference>
<dbReference type="GO" id="GO:0005743">
    <property type="term" value="C:mitochondrial inner membrane"/>
    <property type="evidence" value="ECO:0000250"/>
    <property type="project" value="UniProtKB"/>
</dbReference>
<dbReference type="GO" id="GO:0005758">
    <property type="term" value="C:mitochondrial intermembrane space"/>
    <property type="evidence" value="ECO:0000250"/>
    <property type="project" value="UniProtKB"/>
</dbReference>
<dbReference type="GO" id="GO:0031966">
    <property type="term" value="C:mitochondrial membrane"/>
    <property type="evidence" value="ECO:0000250"/>
    <property type="project" value="UniProtKB"/>
</dbReference>
<dbReference type="GO" id="GO:0042721">
    <property type="term" value="C:TIM22 mitochondrial import inner membrane insertion complex"/>
    <property type="evidence" value="ECO:0000250"/>
    <property type="project" value="UniProtKB"/>
</dbReference>
<dbReference type="GO" id="GO:0047620">
    <property type="term" value="F:acylglycerol kinase activity"/>
    <property type="evidence" value="ECO:0000250"/>
    <property type="project" value="UniProtKB"/>
</dbReference>
<dbReference type="GO" id="GO:0005524">
    <property type="term" value="F:ATP binding"/>
    <property type="evidence" value="ECO:0007669"/>
    <property type="project" value="UniProtKB-KW"/>
</dbReference>
<dbReference type="GO" id="GO:0004143">
    <property type="term" value="F:ATP-dependent diacylglycerol kinase activity"/>
    <property type="evidence" value="ECO:0000250"/>
    <property type="project" value="UniProtKB"/>
</dbReference>
<dbReference type="GO" id="GO:0001729">
    <property type="term" value="F:ceramide kinase activity"/>
    <property type="evidence" value="ECO:0007669"/>
    <property type="project" value="UniProtKB-EC"/>
</dbReference>
<dbReference type="GO" id="GO:0017050">
    <property type="term" value="F:D-erythro-sphingosine kinase activity"/>
    <property type="evidence" value="ECO:0007669"/>
    <property type="project" value="TreeGrafter"/>
</dbReference>
<dbReference type="GO" id="GO:0046513">
    <property type="term" value="P:ceramide biosynthetic process"/>
    <property type="evidence" value="ECO:0007669"/>
    <property type="project" value="Ensembl"/>
</dbReference>
<dbReference type="GO" id="GO:0046486">
    <property type="term" value="P:glycerolipid metabolic process"/>
    <property type="evidence" value="ECO:0007669"/>
    <property type="project" value="UniProtKB-UniPathway"/>
</dbReference>
<dbReference type="GO" id="GO:0046834">
    <property type="term" value="P:lipid phosphorylation"/>
    <property type="evidence" value="ECO:0007669"/>
    <property type="project" value="Ensembl"/>
</dbReference>
<dbReference type="GO" id="GO:0045039">
    <property type="term" value="P:protein insertion into mitochondrial inner membrane"/>
    <property type="evidence" value="ECO:0000250"/>
    <property type="project" value="UniProtKB"/>
</dbReference>
<dbReference type="GO" id="GO:0046512">
    <property type="term" value="P:sphingosine biosynthetic process"/>
    <property type="evidence" value="ECO:0007669"/>
    <property type="project" value="TreeGrafter"/>
</dbReference>
<dbReference type="FunFam" id="3.40.50.10330:FF:000015">
    <property type="entry name" value="acylglycerol kinase, mitochondrial"/>
    <property type="match status" value="1"/>
</dbReference>
<dbReference type="Gene3D" id="3.40.50.10330">
    <property type="entry name" value="Probable inorganic polyphosphate/atp-NAD kinase, domain 1"/>
    <property type="match status" value="1"/>
</dbReference>
<dbReference type="InterPro" id="IPR045579">
    <property type="entry name" value="AGK_C"/>
</dbReference>
<dbReference type="InterPro" id="IPR017438">
    <property type="entry name" value="ATP-NAD_kinase_N"/>
</dbReference>
<dbReference type="InterPro" id="IPR001206">
    <property type="entry name" value="Diacylglycerol_kinase_cat_dom"/>
</dbReference>
<dbReference type="InterPro" id="IPR050187">
    <property type="entry name" value="Lipid_Phosphate_FormReg"/>
</dbReference>
<dbReference type="InterPro" id="IPR016064">
    <property type="entry name" value="NAD/diacylglycerol_kinase_sf"/>
</dbReference>
<dbReference type="PANTHER" id="PTHR12358:SF31">
    <property type="entry name" value="ACYLGLYCEROL KINASE, MITOCHONDRIAL"/>
    <property type="match status" value="1"/>
</dbReference>
<dbReference type="PANTHER" id="PTHR12358">
    <property type="entry name" value="SPHINGOSINE KINASE"/>
    <property type="match status" value="1"/>
</dbReference>
<dbReference type="Pfam" id="PF19712">
    <property type="entry name" value="AGK_C"/>
    <property type="match status" value="1"/>
</dbReference>
<dbReference type="Pfam" id="PF00781">
    <property type="entry name" value="DAGK_cat"/>
    <property type="match status" value="1"/>
</dbReference>
<dbReference type="SMART" id="SM00046">
    <property type="entry name" value="DAGKc"/>
    <property type="match status" value="1"/>
</dbReference>
<dbReference type="SUPFAM" id="SSF111331">
    <property type="entry name" value="NAD kinase/diacylglycerol kinase-like"/>
    <property type="match status" value="1"/>
</dbReference>
<dbReference type="PROSITE" id="PS50146">
    <property type="entry name" value="DAGK"/>
    <property type="match status" value="1"/>
</dbReference>
<keyword id="KW-0007">Acetylation</keyword>
<keyword id="KW-0067">ATP-binding</keyword>
<keyword id="KW-0418">Kinase</keyword>
<keyword id="KW-0443">Lipid metabolism</keyword>
<keyword id="KW-0472">Membrane</keyword>
<keyword id="KW-0496">Mitochondrion</keyword>
<keyword id="KW-0999">Mitochondrion inner membrane</keyword>
<keyword id="KW-0547">Nucleotide-binding</keyword>
<keyword id="KW-1185">Reference proteome</keyword>
<keyword id="KW-0808">Transferase</keyword>
<organism>
    <name type="scientific">Pongo abelii</name>
    <name type="common">Sumatran orangutan</name>
    <name type="synonym">Pongo pygmaeus abelii</name>
    <dbReference type="NCBI Taxonomy" id="9601"/>
    <lineage>
        <taxon>Eukaryota</taxon>
        <taxon>Metazoa</taxon>
        <taxon>Chordata</taxon>
        <taxon>Craniata</taxon>
        <taxon>Vertebrata</taxon>
        <taxon>Euteleostomi</taxon>
        <taxon>Mammalia</taxon>
        <taxon>Eutheria</taxon>
        <taxon>Euarchontoglires</taxon>
        <taxon>Primates</taxon>
        <taxon>Haplorrhini</taxon>
        <taxon>Catarrhini</taxon>
        <taxon>Hominidae</taxon>
        <taxon>Pongo</taxon>
    </lineage>
</organism>
<accession>Q5RED7</accession>
<name>AGK_PONAB</name>